<evidence type="ECO:0000255" key="1">
    <source>
        <dbReference type="HAMAP-Rule" id="MF_00147"/>
    </source>
</evidence>
<evidence type="ECO:0000269" key="2">
    <source>
    </source>
</evidence>
<evidence type="ECO:0000303" key="3">
    <source>
    </source>
</evidence>
<evidence type="ECO:0007829" key="4">
    <source>
        <dbReference type="PDB" id="4IOT"/>
    </source>
</evidence>
<name>TPIS_ECODH</name>
<keyword id="KW-0002">3D-structure</keyword>
<keyword id="KW-0963">Cytoplasm</keyword>
<keyword id="KW-0312">Gluconeogenesis</keyword>
<keyword id="KW-0324">Glycolysis</keyword>
<keyword id="KW-0413">Isomerase</keyword>
<sequence>MRHPLVMGNWKLNGSRHMVHELVSNLRKELAGVAGCAVAIAPPEMYIDMAKREAEGSHIMLGAQNVDLNLSGAFTGETSAAMLKDIGAQYIIIGHSERRTYHKESDELIAKKFAVLKEQGLTPVLCIGETEAENEAGKTEEVCARQIDAVLKTQGAAAFEGAVIAYEPVWAIGTGKSATPAQAQAVHKFIRDHIAKVDANIAEQVIIQYGGSVNASNAAELFAQPDIDGALVGGASLKADAFAVIVKAAEAAKQA</sequence>
<comment type="function">
    <text evidence="1">Involved in the gluconeogenesis. Catalyzes stereospecifically the conversion of dihydroxyacetone phosphate (DHAP) to D-glyceraldehyde-3-phosphate (G3P).</text>
</comment>
<comment type="catalytic activity">
    <reaction evidence="1">
        <text>D-glyceraldehyde 3-phosphate = dihydroxyacetone phosphate</text>
        <dbReference type="Rhea" id="RHEA:18585"/>
        <dbReference type="ChEBI" id="CHEBI:57642"/>
        <dbReference type="ChEBI" id="CHEBI:59776"/>
        <dbReference type="EC" id="5.3.1.1"/>
    </reaction>
</comment>
<comment type="pathway">
    <text evidence="1">Carbohydrate biosynthesis; gluconeogenesis.</text>
</comment>
<comment type="pathway">
    <text evidence="1">Carbohydrate degradation; glycolysis; D-glyceraldehyde 3-phosphate from glycerone phosphate: step 1/1.</text>
</comment>
<comment type="subunit">
    <text evidence="1 2">Homodimer.</text>
</comment>
<comment type="subcellular location">
    <subcellularLocation>
        <location evidence="1">Cytoplasm</location>
    </subcellularLocation>
</comment>
<comment type="similarity">
    <text evidence="1">Belongs to the triosephosphate isomerase family.</text>
</comment>
<dbReference type="EC" id="5.3.1.1" evidence="1"/>
<dbReference type="EMBL" id="CP000948">
    <property type="protein sequence ID" value="ACB04931.1"/>
    <property type="molecule type" value="Genomic_DNA"/>
</dbReference>
<dbReference type="RefSeq" id="WP_001216325.1">
    <property type="nucleotide sequence ID" value="NC_010473.1"/>
</dbReference>
<dbReference type="PDB" id="4IOT">
    <property type="method" value="X-ray"/>
    <property type="resolution" value="1.85 A"/>
    <property type="chains" value="A/B=1-255"/>
</dbReference>
<dbReference type="PDBsum" id="4IOT"/>
<dbReference type="SMR" id="B1XB85"/>
<dbReference type="GeneID" id="93777979"/>
<dbReference type="KEGG" id="ecd:ECDH10B_4108"/>
<dbReference type="HOGENOM" id="CLU_024251_2_1_6"/>
<dbReference type="UniPathway" id="UPA00109">
    <property type="reaction ID" value="UER00189"/>
</dbReference>
<dbReference type="UniPathway" id="UPA00138"/>
<dbReference type="EvolutionaryTrace" id="B1XB85"/>
<dbReference type="GO" id="GO:0005829">
    <property type="term" value="C:cytosol"/>
    <property type="evidence" value="ECO:0007669"/>
    <property type="project" value="TreeGrafter"/>
</dbReference>
<dbReference type="GO" id="GO:0004807">
    <property type="term" value="F:triose-phosphate isomerase activity"/>
    <property type="evidence" value="ECO:0007669"/>
    <property type="project" value="UniProtKB-UniRule"/>
</dbReference>
<dbReference type="GO" id="GO:0006094">
    <property type="term" value="P:gluconeogenesis"/>
    <property type="evidence" value="ECO:0007669"/>
    <property type="project" value="UniProtKB-UniRule"/>
</dbReference>
<dbReference type="GO" id="GO:0046166">
    <property type="term" value="P:glyceraldehyde-3-phosphate biosynthetic process"/>
    <property type="evidence" value="ECO:0007669"/>
    <property type="project" value="TreeGrafter"/>
</dbReference>
<dbReference type="GO" id="GO:0019563">
    <property type="term" value="P:glycerol catabolic process"/>
    <property type="evidence" value="ECO:0007669"/>
    <property type="project" value="TreeGrafter"/>
</dbReference>
<dbReference type="GO" id="GO:0006096">
    <property type="term" value="P:glycolytic process"/>
    <property type="evidence" value="ECO:0007669"/>
    <property type="project" value="UniProtKB-UniRule"/>
</dbReference>
<dbReference type="CDD" id="cd00311">
    <property type="entry name" value="TIM"/>
    <property type="match status" value="1"/>
</dbReference>
<dbReference type="FunFam" id="3.20.20.70:FF:000020">
    <property type="entry name" value="Triosephosphate isomerase"/>
    <property type="match status" value="1"/>
</dbReference>
<dbReference type="Gene3D" id="3.20.20.70">
    <property type="entry name" value="Aldolase class I"/>
    <property type="match status" value="1"/>
</dbReference>
<dbReference type="HAMAP" id="MF_00147_B">
    <property type="entry name" value="TIM_B"/>
    <property type="match status" value="1"/>
</dbReference>
<dbReference type="InterPro" id="IPR013785">
    <property type="entry name" value="Aldolase_TIM"/>
</dbReference>
<dbReference type="InterPro" id="IPR035990">
    <property type="entry name" value="TIM_sf"/>
</dbReference>
<dbReference type="InterPro" id="IPR022896">
    <property type="entry name" value="TrioseP_Isoase_bac/euk"/>
</dbReference>
<dbReference type="InterPro" id="IPR000652">
    <property type="entry name" value="Triosephosphate_isomerase"/>
</dbReference>
<dbReference type="InterPro" id="IPR020861">
    <property type="entry name" value="Triosephosphate_isomerase_AS"/>
</dbReference>
<dbReference type="NCBIfam" id="TIGR00419">
    <property type="entry name" value="tim"/>
    <property type="match status" value="1"/>
</dbReference>
<dbReference type="PANTHER" id="PTHR21139">
    <property type="entry name" value="TRIOSEPHOSPHATE ISOMERASE"/>
    <property type="match status" value="1"/>
</dbReference>
<dbReference type="PANTHER" id="PTHR21139:SF42">
    <property type="entry name" value="TRIOSEPHOSPHATE ISOMERASE"/>
    <property type="match status" value="1"/>
</dbReference>
<dbReference type="Pfam" id="PF00121">
    <property type="entry name" value="TIM"/>
    <property type="match status" value="1"/>
</dbReference>
<dbReference type="SUPFAM" id="SSF51351">
    <property type="entry name" value="Triosephosphate isomerase (TIM)"/>
    <property type="match status" value="1"/>
</dbReference>
<dbReference type="PROSITE" id="PS00171">
    <property type="entry name" value="TIM_1"/>
    <property type="match status" value="1"/>
</dbReference>
<dbReference type="PROSITE" id="PS51440">
    <property type="entry name" value="TIM_2"/>
    <property type="match status" value="1"/>
</dbReference>
<reference key="1">
    <citation type="journal article" date="2008" name="J. Bacteriol.">
        <title>The complete genome sequence of Escherichia coli DH10B: insights into the biology of a laboratory workhorse.</title>
        <authorList>
            <person name="Durfee T."/>
            <person name="Nelson R."/>
            <person name="Baldwin S."/>
            <person name="Plunkett G. III"/>
            <person name="Burland V."/>
            <person name="Mau B."/>
            <person name="Petrosino J.F."/>
            <person name="Qin X."/>
            <person name="Muzny D.M."/>
            <person name="Ayele M."/>
            <person name="Gibbs R.A."/>
            <person name="Csorgo B."/>
            <person name="Posfai G."/>
            <person name="Weinstock G.M."/>
            <person name="Blattner F.R."/>
        </authorList>
    </citation>
    <scope>NUCLEOTIDE SEQUENCE [LARGE SCALE GENOMIC DNA]</scope>
    <source>
        <strain>K12 / DH10B</strain>
    </source>
</reference>
<reference key="2">
    <citation type="journal article" date="2013" name="Acta Crystallogr. F">
        <title>Triosephosphate isomerase is a common crystallization contaminant of soluble His-tagged proteins produced in Escherichia coli.</title>
        <authorList>
            <person name="Kozlov G."/>
            <person name="Vinaik R."/>
            <person name="Gehring K."/>
        </authorList>
    </citation>
    <scope>X-RAY CRYSTALLOGRAPHY (1.85 ANGSTROMS) IN COMPLEX WITH SUBSTRATE ANALOG</scope>
    <scope>SUBUNIT</scope>
</reference>
<feature type="chain" id="PRO_1000096495" description="Triosephosphate isomerase">
    <location>
        <begin position="1"/>
        <end position="255"/>
    </location>
</feature>
<feature type="active site" description="Electrophile" evidence="1">
    <location>
        <position position="95"/>
    </location>
</feature>
<feature type="active site" description="Proton acceptor" evidence="1">
    <location>
        <position position="167"/>
    </location>
</feature>
<feature type="binding site" evidence="1">
    <location>
        <begin position="9"/>
        <end position="11"/>
    </location>
    <ligand>
        <name>substrate</name>
    </ligand>
</feature>
<feature type="binding site" evidence="1">
    <location>
        <position position="173"/>
    </location>
    <ligand>
        <name>substrate</name>
    </ligand>
</feature>
<feature type="binding site" evidence="1 2">
    <location>
        <position position="212"/>
    </location>
    <ligand>
        <name>substrate</name>
    </ligand>
</feature>
<feature type="binding site" evidence="1 2">
    <location>
        <begin position="233"/>
        <end position="234"/>
    </location>
    <ligand>
        <name>substrate</name>
    </ligand>
</feature>
<feature type="strand" evidence="4">
    <location>
        <begin position="5"/>
        <end position="9"/>
    </location>
</feature>
<feature type="helix" evidence="4">
    <location>
        <begin position="16"/>
        <end position="30"/>
    </location>
</feature>
<feature type="strand" evidence="4">
    <location>
        <begin position="35"/>
        <end position="41"/>
    </location>
</feature>
<feature type="helix" evidence="4">
    <location>
        <begin position="44"/>
        <end position="46"/>
    </location>
</feature>
<feature type="helix" evidence="4">
    <location>
        <begin position="47"/>
        <end position="54"/>
    </location>
</feature>
<feature type="strand" evidence="4">
    <location>
        <begin position="57"/>
        <end position="64"/>
    </location>
</feature>
<feature type="strand" evidence="4">
    <location>
        <begin position="70"/>
        <end position="73"/>
    </location>
</feature>
<feature type="helix" evidence="4">
    <location>
        <begin position="80"/>
        <end position="86"/>
    </location>
</feature>
<feature type="strand" evidence="4">
    <location>
        <begin position="88"/>
        <end position="94"/>
    </location>
</feature>
<feature type="helix" evidence="4">
    <location>
        <begin position="96"/>
        <end position="101"/>
    </location>
</feature>
<feature type="helix" evidence="4">
    <location>
        <begin position="106"/>
        <end position="118"/>
    </location>
</feature>
<feature type="strand" evidence="4">
    <location>
        <begin position="122"/>
        <end position="127"/>
    </location>
</feature>
<feature type="helix" evidence="4">
    <location>
        <begin position="131"/>
        <end position="135"/>
    </location>
</feature>
<feature type="helix" evidence="4">
    <location>
        <begin position="139"/>
        <end position="154"/>
    </location>
</feature>
<feature type="helix" evidence="4">
    <location>
        <begin position="156"/>
        <end position="159"/>
    </location>
</feature>
<feature type="strand" evidence="4">
    <location>
        <begin position="163"/>
        <end position="166"/>
    </location>
</feature>
<feature type="helix" evidence="4">
    <location>
        <begin position="169"/>
        <end position="171"/>
    </location>
</feature>
<feature type="strand" evidence="4">
    <location>
        <begin position="172"/>
        <end position="175"/>
    </location>
</feature>
<feature type="helix" evidence="4">
    <location>
        <begin position="180"/>
        <end position="195"/>
    </location>
</feature>
<feature type="helix" evidence="4">
    <location>
        <begin position="199"/>
        <end position="204"/>
    </location>
</feature>
<feature type="strand" evidence="4">
    <location>
        <begin position="206"/>
        <end position="209"/>
    </location>
</feature>
<feature type="turn" evidence="4">
    <location>
        <begin position="215"/>
        <end position="217"/>
    </location>
</feature>
<feature type="helix" evidence="4">
    <location>
        <begin position="218"/>
        <end position="222"/>
    </location>
</feature>
<feature type="strand" evidence="4">
    <location>
        <begin position="229"/>
        <end position="233"/>
    </location>
</feature>
<feature type="helix" evidence="4">
    <location>
        <begin position="234"/>
        <end position="237"/>
    </location>
</feature>
<feature type="helix" evidence="4">
    <location>
        <begin position="239"/>
        <end position="253"/>
    </location>
</feature>
<accession>B1XB85</accession>
<proteinExistence type="evidence at protein level"/>
<protein>
    <recommendedName>
        <fullName evidence="1 3">Triosephosphate isomerase</fullName>
        <shortName evidence="1 3">TIM</shortName>
        <shortName evidence="1">TPI</shortName>
        <ecNumber evidence="1">5.3.1.1</ecNumber>
    </recommendedName>
    <alternativeName>
        <fullName evidence="1">Triose-phosphate isomerase</fullName>
    </alternativeName>
</protein>
<organism>
    <name type="scientific">Escherichia coli (strain K12 / DH10B)</name>
    <dbReference type="NCBI Taxonomy" id="316385"/>
    <lineage>
        <taxon>Bacteria</taxon>
        <taxon>Pseudomonadati</taxon>
        <taxon>Pseudomonadota</taxon>
        <taxon>Gammaproteobacteria</taxon>
        <taxon>Enterobacterales</taxon>
        <taxon>Enterobacteriaceae</taxon>
        <taxon>Escherichia</taxon>
    </lineage>
</organism>
<gene>
    <name evidence="1" type="primary">tpiA</name>
    <name type="ordered locus">ECDH10B_4108</name>
</gene>